<reference key="1">
    <citation type="submission" date="2009-01" db="EMBL/GenBank/DDBJ databases">
        <title>Complete sequence of Clostridium cellulolyticum H10.</title>
        <authorList>
            <consortium name="US DOE Joint Genome Institute"/>
            <person name="Lucas S."/>
            <person name="Copeland A."/>
            <person name="Lapidus A."/>
            <person name="Glavina del Rio T."/>
            <person name="Dalin E."/>
            <person name="Tice H."/>
            <person name="Bruce D."/>
            <person name="Goodwin L."/>
            <person name="Pitluck S."/>
            <person name="Chertkov O."/>
            <person name="Saunders E."/>
            <person name="Brettin T."/>
            <person name="Detter J.C."/>
            <person name="Han C."/>
            <person name="Larimer F."/>
            <person name="Land M."/>
            <person name="Hauser L."/>
            <person name="Kyrpides N."/>
            <person name="Ivanova N."/>
            <person name="Zhou J."/>
            <person name="Richardson P."/>
        </authorList>
    </citation>
    <scope>NUCLEOTIDE SEQUENCE [LARGE SCALE GENOMIC DNA]</scope>
    <source>
        <strain>ATCC 35319 / DSM 5812 / JCM 6584 / H10</strain>
    </source>
</reference>
<name>Y2290_RUMCH</name>
<organism>
    <name type="scientific">Ruminiclostridium cellulolyticum (strain ATCC 35319 / DSM 5812 / JCM 6584 / H10)</name>
    <name type="common">Clostridium cellulolyticum</name>
    <dbReference type="NCBI Taxonomy" id="394503"/>
    <lineage>
        <taxon>Bacteria</taxon>
        <taxon>Bacillati</taxon>
        <taxon>Bacillota</taxon>
        <taxon>Clostridia</taxon>
        <taxon>Eubacteriales</taxon>
        <taxon>Oscillospiraceae</taxon>
        <taxon>Ruminiclostridium</taxon>
    </lineage>
</organism>
<evidence type="ECO:0000255" key="1">
    <source>
        <dbReference type="HAMAP-Rule" id="MF_00636"/>
    </source>
</evidence>
<dbReference type="EMBL" id="CP001348">
    <property type="protein sequence ID" value="ACL76627.1"/>
    <property type="molecule type" value="Genomic_DNA"/>
</dbReference>
<dbReference type="RefSeq" id="WP_015925719.1">
    <property type="nucleotide sequence ID" value="NC_011898.1"/>
</dbReference>
<dbReference type="SMR" id="B8I4X3"/>
<dbReference type="STRING" id="394503.Ccel_2290"/>
<dbReference type="KEGG" id="cce:Ccel_2290"/>
<dbReference type="eggNOG" id="COG1660">
    <property type="taxonomic scope" value="Bacteria"/>
</dbReference>
<dbReference type="HOGENOM" id="CLU_059558_0_0_9"/>
<dbReference type="OrthoDB" id="9784461at2"/>
<dbReference type="Proteomes" id="UP000001349">
    <property type="component" value="Chromosome"/>
</dbReference>
<dbReference type="GO" id="GO:0005524">
    <property type="term" value="F:ATP binding"/>
    <property type="evidence" value="ECO:0007669"/>
    <property type="project" value="UniProtKB-UniRule"/>
</dbReference>
<dbReference type="GO" id="GO:0005525">
    <property type="term" value="F:GTP binding"/>
    <property type="evidence" value="ECO:0007669"/>
    <property type="project" value="UniProtKB-UniRule"/>
</dbReference>
<dbReference type="Gene3D" id="3.40.50.300">
    <property type="entry name" value="P-loop containing nucleotide triphosphate hydrolases"/>
    <property type="match status" value="1"/>
</dbReference>
<dbReference type="HAMAP" id="MF_00636">
    <property type="entry name" value="RapZ_like"/>
    <property type="match status" value="1"/>
</dbReference>
<dbReference type="InterPro" id="IPR027417">
    <property type="entry name" value="P-loop_NTPase"/>
</dbReference>
<dbReference type="InterPro" id="IPR005337">
    <property type="entry name" value="RapZ-like"/>
</dbReference>
<dbReference type="InterPro" id="IPR053930">
    <property type="entry name" value="RapZ-like_N"/>
</dbReference>
<dbReference type="InterPro" id="IPR053931">
    <property type="entry name" value="RapZ_C"/>
</dbReference>
<dbReference type="NCBIfam" id="NF003828">
    <property type="entry name" value="PRK05416.1"/>
    <property type="match status" value="1"/>
</dbReference>
<dbReference type="PANTHER" id="PTHR30448">
    <property type="entry name" value="RNASE ADAPTER PROTEIN RAPZ"/>
    <property type="match status" value="1"/>
</dbReference>
<dbReference type="PANTHER" id="PTHR30448:SF0">
    <property type="entry name" value="RNASE ADAPTER PROTEIN RAPZ"/>
    <property type="match status" value="1"/>
</dbReference>
<dbReference type="Pfam" id="PF22740">
    <property type="entry name" value="PapZ_C"/>
    <property type="match status" value="1"/>
</dbReference>
<dbReference type="Pfam" id="PF03668">
    <property type="entry name" value="RapZ-like_N"/>
    <property type="match status" value="1"/>
</dbReference>
<dbReference type="PIRSF" id="PIRSF005052">
    <property type="entry name" value="P-loopkin"/>
    <property type="match status" value="1"/>
</dbReference>
<dbReference type="SUPFAM" id="SSF52540">
    <property type="entry name" value="P-loop containing nucleoside triphosphate hydrolases"/>
    <property type="match status" value="1"/>
</dbReference>
<sequence length="291" mass="32793">MRFVIVTGMSGAGKSLVTKYLEDIGFFCVDNLPPALIPKFAEISAQSEGKMEKIALVIDIRGGELLHDLFPALEEVKKSGFSYEILFLEADDDVLVKRYKESRRQHPLAPEGRLLLGIREERKALQTIKSKANYIIDTSTLVTRQLKQEINGIFLEGKIFKGIIINVVSFGFKYGIPTDCDLVFDVRFIPNPYYIAPMKNQTGKDQMVKEFVLNASETKEFISKLDGMLDFLIPNYIKEGKSQLDIGIGCTGGRHRSVAIADEVYRRLEEKMHSVVIEHRDIEKDGKGVGK</sequence>
<accession>B8I4X3</accession>
<feature type="chain" id="PRO_1000147355" description="Nucleotide-binding protein Ccel_2290">
    <location>
        <begin position="1"/>
        <end position="291"/>
    </location>
</feature>
<feature type="binding site" evidence="1">
    <location>
        <begin position="8"/>
        <end position="15"/>
    </location>
    <ligand>
        <name>ATP</name>
        <dbReference type="ChEBI" id="CHEBI:30616"/>
    </ligand>
</feature>
<feature type="binding site" evidence="1">
    <location>
        <begin position="59"/>
        <end position="62"/>
    </location>
    <ligand>
        <name>GTP</name>
        <dbReference type="ChEBI" id="CHEBI:37565"/>
    </ligand>
</feature>
<comment type="function">
    <text evidence="1">Displays ATPase and GTPase activities.</text>
</comment>
<comment type="similarity">
    <text evidence="1">Belongs to the RapZ-like family.</text>
</comment>
<gene>
    <name type="ordered locus">Ccel_2290</name>
</gene>
<keyword id="KW-0067">ATP-binding</keyword>
<keyword id="KW-0342">GTP-binding</keyword>
<keyword id="KW-0547">Nucleotide-binding</keyword>
<keyword id="KW-1185">Reference proteome</keyword>
<proteinExistence type="inferred from homology"/>
<protein>
    <recommendedName>
        <fullName evidence="1">Nucleotide-binding protein Ccel_2290</fullName>
    </recommendedName>
</protein>